<proteinExistence type="evidence at protein level"/>
<protein>
    <recommendedName>
        <fullName>Putative disease resistance protein PS10</fullName>
    </recommendedName>
    <alternativeName>
        <fullName>TIR-NBS-LRR</fullName>
    </alternativeName>
</protein>
<name>PS10_PINST</name>
<keyword id="KW-0903">Direct protein sequencing</keyword>
<feature type="chain" id="PRO_0000240617" description="Putative disease resistance protein PS10">
    <location>
        <begin position="1" status="less than"/>
        <end position="17" status="greater than"/>
    </location>
</feature>
<feature type="non-consecutive residues" evidence="2">
    <location>
        <begin position="12"/>
        <end position="13"/>
    </location>
</feature>
<feature type="non-terminal residue" evidence="2">
    <location>
        <position position="1"/>
    </location>
</feature>
<feature type="non-terminal residue" evidence="2">
    <location>
        <position position="17"/>
    </location>
</feature>
<evidence type="ECO:0000269" key="1">
    <source>
    </source>
</evidence>
<evidence type="ECO:0000303" key="2">
    <source>
    </source>
</evidence>
<evidence type="ECO:0000305" key="3"/>
<comment type="miscellaneous">
    <text evidence="1">On the 2D-gel the determined pI of this protein is: 7.1, its MW is: 22.1 kDa.</text>
</comment>
<comment type="caution">
    <text evidence="1">The order of the peptides shown is unknown.</text>
</comment>
<sequence length="17" mass="1931">SGLQLLDLSNNREVEML</sequence>
<accession>P84726</accession>
<organism>
    <name type="scientific">Pinus strobus</name>
    <name type="common">Eastern white pine</name>
    <dbReference type="NCBI Taxonomy" id="3348"/>
    <lineage>
        <taxon>Eukaryota</taxon>
        <taxon>Viridiplantae</taxon>
        <taxon>Streptophyta</taxon>
        <taxon>Embryophyta</taxon>
        <taxon>Tracheophyta</taxon>
        <taxon>Spermatophyta</taxon>
        <taxon>Pinopsida</taxon>
        <taxon>Pinidae</taxon>
        <taxon>Conifers I</taxon>
        <taxon>Pinales</taxon>
        <taxon>Pinaceae</taxon>
        <taxon>Pinus</taxon>
        <taxon>Pinus subgen. Strobus</taxon>
    </lineage>
</organism>
<reference evidence="3" key="1">
    <citation type="journal article" date="2006" name="Mol. Plant Microbe Interact.">
        <title>Proteomic comparison of needles from blister rust-resistant and susceptible Pinus strobus seedlings reveals upregulation of putative disease resistance proteins.</title>
        <authorList>
            <person name="Smith J.A."/>
            <person name="Blanchette R.A."/>
            <person name="Burnes T.A."/>
            <person name="Jacobs J.J."/>
            <person name="Higgins L."/>
            <person name="Witthuhn B.A."/>
            <person name="David A.J."/>
            <person name="Gillman J.H."/>
        </authorList>
    </citation>
    <scope>PROTEIN SEQUENCE</scope>
    <source>
        <tissue evidence="1">Leaf</tissue>
    </source>
</reference>